<dbReference type="EC" id="4.3.2.1" evidence="1"/>
<dbReference type="EMBL" id="CP000512">
    <property type="protein sequence ID" value="ABM32533.1"/>
    <property type="molecule type" value="Genomic_DNA"/>
</dbReference>
<dbReference type="RefSeq" id="WP_011795075.1">
    <property type="nucleotide sequence ID" value="NC_008752.1"/>
</dbReference>
<dbReference type="SMR" id="A1TNJ5"/>
<dbReference type="STRING" id="397945.Aave_1949"/>
<dbReference type="GeneID" id="79791767"/>
<dbReference type="KEGG" id="aav:Aave_1949"/>
<dbReference type="eggNOG" id="COG0165">
    <property type="taxonomic scope" value="Bacteria"/>
</dbReference>
<dbReference type="HOGENOM" id="CLU_027272_2_3_4"/>
<dbReference type="OrthoDB" id="9769623at2"/>
<dbReference type="UniPathway" id="UPA00068">
    <property type="reaction ID" value="UER00114"/>
</dbReference>
<dbReference type="Proteomes" id="UP000002596">
    <property type="component" value="Chromosome"/>
</dbReference>
<dbReference type="GO" id="GO:0005829">
    <property type="term" value="C:cytosol"/>
    <property type="evidence" value="ECO:0007669"/>
    <property type="project" value="TreeGrafter"/>
</dbReference>
<dbReference type="GO" id="GO:0004056">
    <property type="term" value="F:argininosuccinate lyase activity"/>
    <property type="evidence" value="ECO:0007669"/>
    <property type="project" value="UniProtKB-UniRule"/>
</dbReference>
<dbReference type="GO" id="GO:0042450">
    <property type="term" value="P:arginine biosynthetic process via ornithine"/>
    <property type="evidence" value="ECO:0007669"/>
    <property type="project" value="InterPro"/>
</dbReference>
<dbReference type="GO" id="GO:0006526">
    <property type="term" value="P:L-arginine biosynthetic process"/>
    <property type="evidence" value="ECO:0007669"/>
    <property type="project" value="UniProtKB-UniRule"/>
</dbReference>
<dbReference type="CDD" id="cd01359">
    <property type="entry name" value="Argininosuccinate_lyase"/>
    <property type="match status" value="1"/>
</dbReference>
<dbReference type="FunFam" id="1.10.275.10:FF:000002">
    <property type="entry name" value="Argininosuccinate lyase"/>
    <property type="match status" value="1"/>
</dbReference>
<dbReference type="FunFam" id="1.10.40.30:FF:000001">
    <property type="entry name" value="Argininosuccinate lyase"/>
    <property type="match status" value="1"/>
</dbReference>
<dbReference type="FunFam" id="1.20.200.10:FF:000015">
    <property type="entry name" value="argininosuccinate lyase isoform X2"/>
    <property type="match status" value="1"/>
</dbReference>
<dbReference type="Gene3D" id="1.10.40.30">
    <property type="entry name" value="Fumarase/aspartase (C-terminal domain)"/>
    <property type="match status" value="1"/>
</dbReference>
<dbReference type="Gene3D" id="1.20.200.10">
    <property type="entry name" value="Fumarase/aspartase (Central domain)"/>
    <property type="match status" value="1"/>
</dbReference>
<dbReference type="Gene3D" id="1.10.275.10">
    <property type="entry name" value="Fumarase/aspartase (N-terminal domain)"/>
    <property type="match status" value="1"/>
</dbReference>
<dbReference type="HAMAP" id="MF_00006">
    <property type="entry name" value="Arg_succ_lyase"/>
    <property type="match status" value="1"/>
</dbReference>
<dbReference type="InterPro" id="IPR029419">
    <property type="entry name" value="Arg_succ_lyase_C"/>
</dbReference>
<dbReference type="InterPro" id="IPR009049">
    <property type="entry name" value="Argininosuccinate_lyase"/>
</dbReference>
<dbReference type="InterPro" id="IPR024083">
    <property type="entry name" value="Fumarase/histidase_N"/>
</dbReference>
<dbReference type="InterPro" id="IPR020557">
    <property type="entry name" value="Fumarate_lyase_CS"/>
</dbReference>
<dbReference type="InterPro" id="IPR000362">
    <property type="entry name" value="Fumarate_lyase_fam"/>
</dbReference>
<dbReference type="InterPro" id="IPR022761">
    <property type="entry name" value="Fumarate_lyase_N"/>
</dbReference>
<dbReference type="InterPro" id="IPR008948">
    <property type="entry name" value="L-Aspartase-like"/>
</dbReference>
<dbReference type="NCBIfam" id="TIGR00838">
    <property type="entry name" value="argH"/>
    <property type="match status" value="1"/>
</dbReference>
<dbReference type="PANTHER" id="PTHR43814">
    <property type="entry name" value="ARGININOSUCCINATE LYASE"/>
    <property type="match status" value="1"/>
</dbReference>
<dbReference type="PANTHER" id="PTHR43814:SF1">
    <property type="entry name" value="ARGININOSUCCINATE LYASE"/>
    <property type="match status" value="1"/>
</dbReference>
<dbReference type="Pfam" id="PF14698">
    <property type="entry name" value="ASL_C2"/>
    <property type="match status" value="1"/>
</dbReference>
<dbReference type="Pfam" id="PF00206">
    <property type="entry name" value="Lyase_1"/>
    <property type="match status" value="1"/>
</dbReference>
<dbReference type="PRINTS" id="PR00145">
    <property type="entry name" value="ARGSUCLYASE"/>
</dbReference>
<dbReference type="PRINTS" id="PR00149">
    <property type="entry name" value="FUMRATELYASE"/>
</dbReference>
<dbReference type="SUPFAM" id="SSF48557">
    <property type="entry name" value="L-aspartase-like"/>
    <property type="match status" value="1"/>
</dbReference>
<dbReference type="PROSITE" id="PS00163">
    <property type="entry name" value="FUMARATE_LYASES"/>
    <property type="match status" value="1"/>
</dbReference>
<reference key="1">
    <citation type="submission" date="2006-12" db="EMBL/GenBank/DDBJ databases">
        <title>Complete sequence of Acidovorax avenae subsp. citrulli AAC00-1.</title>
        <authorList>
            <person name="Copeland A."/>
            <person name="Lucas S."/>
            <person name="Lapidus A."/>
            <person name="Barry K."/>
            <person name="Detter J.C."/>
            <person name="Glavina del Rio T."/>
            <person name="Dalin E."/>
            <person name="Tice H."/>
            <person name="Pitluck S."/>
            <person name="Kiss H."/>
            <person name="Brettin T."/>
            <person name="Bruce D."/>
            <person name="Han C."/>
            <person name="Tapia R."/>
            <person name="Gilna P."/>
            <person name="Schmutz J."/>
            <person name="Larimer F."/>
            <person name="Land M."/>
            <person name="Hauser L."/>
            <person name="Kyrpides N."/>
            <person name="Kim E."/>
            <person name="Stahl D."/>
            <person name="Richardson P."/>
        </authorList>
    </citation>
    <scope>NUCLEOTIDE SEQUENCE [LARGE SCALE GENOMIC DNA]</scope>
    <source>
        <strain>AAC00-1</strain>
    </source>
</reference>
<evidence type="ECO:0000255" key="1">
    <source>
        <dbReference type="HAMAP-Rule" id="MF_00006"/>
    </source>
</evidence>
<gene>
    <name evidence="1" type="primary">argH</name>
    <name type="ordered locus">Aave_1949</name>
</gene>
<comment type="catalytic activity">
    <reaction evidence="1">
        <text>2-(N(omega)-L-arginino)succinate = fumarate + L-arginine</text>
        <dbReference type="Rhea" id="RHEA:24020"/>
        <dbReference type="ChEBI" id="CHEBI:29806"/>
        <dbReference type="ChEBI" id="CHEBI:32682"/>
        <dbReference type="ChEBI" id="CHEBI:57472"/>
        <dbReference type="EC" id="4.3.2.1"/>
    </reaction>
</comment>
<comment type="pathway">
    <text evidence="1">Amino-acid biosynthesis; L-arginine biosynthesis; L-arginine from L-ornithine and carbamoyl phosphate: step 3/3.</text>
</comment>
<comment type="subcellular location">
    <subcellularLocation>
        <location evidence="1">Cytoplasm</location>
    </subcellularLocation>
</comment>
<comment type="similarity">
    <text evidence="1">Belongs to the lyase 1 family. Argininosuccinate lyase subfamily.</text>
</comment>
<keyword id="KW-0028">Amino-acid biosynthesis</keyword>
<keyword id="KW-0055">Arginine biosynthesis</keyword>
<keyword id="KW-0963">Cytoplasm</keyword>
<keyword id="KW-0456">Lyase</keyword>
<accession>A1TNJ5</accession>
<feature type="chain" id="PRO_0000321424" description="Argininosuccinate lyase">
    <location>
        <begin position="1"/>
        <end position="485"/>
    </location>
</feature>
<name>ARLY_PARC0</name>
<protein>
    <recommendedName>
        <fullName evidence="1">Argininosuccinate lyase</fullName>
        <shortName evidence="1">ASAL</shortName>
        <ecNumber evidence="1">4.3.2.1</ecNumber>
    </recommendedName>
    <alternativeName>
        <fullName evidence="1">Arginosuccinase</fullName>
    </alternativeName>
</protein>
<proteinExistence type="inferred from homology"/>
<sequence>MSSSPTAQPSQDQLATKAQAWSALFSEPMSDLVKRYTSSVFFDKRLWQADIAGSLAHADMLAAQGIISADDHAAIRRGMATITQEIESGAFEWKLDLEDVHLNIEARLTQLVGDAGKRLHTGRSRNDQVATDVRLWLRGEIDMIADLLKELQRSLVDVAEQNVEVILPGFTHLQVAQPVSFAHHMLAYVEMFARDAERMQDVRRRTNVLPLGSAALAGTTYPLDRERVARTLGMEGVCQNSLDAVSDRDFAIEFTAAASLCMVHVSRLSEELIIWMSQNFGFIRIADRFTTGSSIMPQKKNPDVPELARGKTGRVVGHLMGLITLMKGQPLAYNKDNQEDKEPLFDTVDTLKDTLRIFAEMVGGQRDPATGRKEGGITVNPQAMEQAAQKGYATATDLADYLVKKGLPFRDAHETVAHAVKAATSHGVDLSELPLTVLQGFHPAIGKDVFDALSLRGSLNARNTLGGTAPAQVRTQLARHRARLG</sequence>
<organism>
    <name type="scientific">Paracidovorax citrulli (strain AAC00-1)</name>
    <name type="common">Acidovorax citrulli</name>
    <dbReference type="NCBI Taxonomy" id="397945"/>
    <lineage>
        <taxon>Bacteria</taxon>
        <taxon>Pseudomonadati</taxon>
        <taxon>Pseudomonadota</taxon>
        <taxon>Betaproteobacteria</taxon>
        <taxon>Burkholderiales</taxon>
        <taxon>Comamonadaceae</taxon>
        <taxon>Paracidovorax</taxon>
    </lineage>
</organism>